<name>SURA_SHESR</name>
<sequence length="434" mass="48969">MKPSKHLIFALFALAISQPTMAAPQPIDRVAVQINDGIVLESEITNMIDTVKANARAANQSLPSDSALRTQVIERLILTRLQLQMADRIGLHIGDLQLDQAIENIAREQKMTVAQMQQKIESEGLSFGQYREQLREEITLGEIQRIQVQRRIQVSPQEITGLVKLIQEQGMKDVEYQIGHILIDVPNNPNSEQLEASSKRANAVLERLKSGEDFRRTAIASSSGPKALEGGIWDYMNINEMPTLFAEVINGAKKGDIIGPIKSGAGFHIIKIMDARGLQTKEIEEVRARHILLKPSPILSEDRAKAMLEQFLKQIRSGEAKFEDLARQYSEDPGSATKGGELGWAEPSIYVPEFAQTLNSLSPDQISEPFRTTHGWHITQLEERRKTDATDQFNTNRAHQLIFRRKFNEELQNWLDEMRADAYIEVFQPESNRG</sequence>
<keyword id="KW-0143">Chaperone</keyword>
<keyword id="KW-0413">Isomerase</keyword>
<keyword id="KW-0574">Periplasm</keyword>
<keyword id="KW-0677">Repeat</keyword>
<keyword id="KW-0697">Rotamase</keyword>
<keyword id="KW-0732">Signal</keyword>
<feature type="signal peptide" evidence="1">
    <location>
        <begin position="1"/>
        <end position="22"/>
    </location>
</feature>
<feature type="chain" id="PRO_5000129122" description="Chaperone SurA">
    <location>
        <begin position="23"/>
        <end position="434"/>
    </location>
</feature>
<feature type="domain" description="PpiC 1" evidence="1">
    <location>
        <begin position="173"/>
        <end position="274"/>
    </location>
</feature>
<feature type="domain" description="PpiC 2" evidence="1">
    <location>
        <begin position="283"/>
        <end position="383"/>
    </location>
</feature>
<proteinExistence type="inferred from homology"/>
<protein>
    <recommendedName>
        <fullName evidence="1">Chaperone SurA</fullName>
    </recommendedName>
    <alternativeName>
        <fullName evidence="1">Peptidyl-prolyl cis-trans isomerase SurA</fullName>
        <shortName evidence="1">PPIase SurA</shortName>
        <ecNumber evidence="1">5.2.1.8</ecNumber>
    </alternativeName>
    <alternativeName>
        <fullName evidence="1">Rotamase SurA</fullName>
    </alternativeName>
</protein>
<reference key="1">
    <citation type="submission" date="2006-08" db="EMBL/GenBank/DDBJ databases">
        <title>Complete sequence of chromosome 1 of Shewanella sp. MR-7.</title>
        <authorList>
            <person name="Copeland A."/>
            <person name="Lucas S."/>
            <person name="Lapidus A."/>
            <person name="Barry K."/>
            <person name="Detter J.C."/>
            <person name="Glavina del Rio T."/>
            <person name="Hammon N."/>
            <person name="Israni S."/>
            <person name="Dalin E."/>
            <person name="Tice H."/>
            <person name="Pitluck S."/>
            <person name="Kiss H."/>
            <person name="Brettin T."/>
            <person name="Bruce D."/>
            <person name="Han C."/>
            <person name="Tapia R."/>
            <person name="Gilna P."/>
            <person name="Schmutz J."/>
            <person name="Larimer F."/>
            <person name="Land M."/>
            <person name="Hauser L."/>
            <person name="Kyrpides N."/>
            <person name="Mikhailova N."/>
            <person name="Nealson K."/>
            <person name="Konstantinidis K."/>
            <person name="Klappenbach J."/>
            <person name="Tiedje J."/>
            <person name="Richardson P."/>
        </authorList>
    </citation>
    <scope>NUCLEOTIDE SEQUENCE [LARGE SCALE GENOMIC DNA]</scope>
    <source>
        <strain>MR-7</strain>
    </source>
</reference>
<gene>
    <name evidence="1" type="primary">surA</name>
    <name type="ordered locus">Shewmr7_3113</name>
</gene>
<dbReference type="EC" id="5.2.1.8" evidence="1"/>
<dbReference type="EMBL" id="CP000444">
    <property type="protein sequence ID" value="ABI44097.1"/>
    <property type="molecule type" value="Genomic_DNA"/>
</dbReference>
<dbReference type="SMR" id="Q0HS08"/>
<dbReference type="KEGG" id="shm:Shewmr7_3113"/>
<dbReference type="HOGENOM" id="CLU_034646_11_0_6"/>
<dbReference type="GO" id="GO:0030288">
    <property type="term" value="C:outer membrane-bounded periplasmic space"/>
    <property type="evidence" value="ECO:0007669"/>
    <property type="project" value="InterPro"/>
</dbReference>
<dbReference type="GO" id="GO:0042277">
    <property type="term" value="F:peptide binding"/>
    <property type="evidence" value="ECO:0007669"/>
    <property type="project" value="InterPro"/>
</dbReference>
<dbReference type="GO" id="GO:0003755">
    <property type="term" value="F:peptidyl-prolyl cis-trans isomerase activity"/>
    <property type="evidence" value="ECO:0007669"/>
    <property type="project" value="UniProtKB-UniRule"/>
</dbReference>
<dbReference type="GO" id="GO:0051082">
    <property type="term" value="F:unfolded protein binding"/>
    <property type="evidence" value="ECO:0007669"/>
    <property type="project" value="UniProtKB-UniRule"/>
</dbReference>
<dbReference type="GO" id="GO:0043165">
    <property type="term" value="P:Gram-negative-bacterium-type cell outer membrane assembly"/>
    <property type="evidence" value="ECO:0007669"/>
    <property type="project" value="InterPro"/>
</dbReference>
<dbReference type="GO" id="GO:0006457">
    <property type="term" value="P:protein folding"/>
    <property type="evidence" value="ECO:0007669"/>
    <property type="project" value="UniProtKB-UniRule"/>
</dbReference>
<dbReference type="GO" id="GO:0050821">
    <property type="term" value="P:protein stabilization"/>
    <property type="evidence" value="ECO:0007669"/>
    <property type="project" value="InterPro"/>
</dbReference>
<dbReference type="Gene3D" id="3.10.50.40">
    <property type="match status" value="2"/>
</dbReference>
<dbReference type="Gene3D" id="1.10.4030.10">
    <property type="entry name" value="Porin chaperone SurA, peptide-binding domain"/>
    <property type="match status" value="2"/>
</dbReference>
<dbReference type="HAMAP" id="MF_01183">
    <property type="entry name" value="Chaperone_SurA"/>
    <property type="match status" value="1"/>
</dbReference>
<dbReference type="InterPro" id="IPR050280">
    <property type="entry name" value="OMP_Chaperone_SurA"/>
</dbReference>
<dbReference type="InterPro" id="IPR046357">
    <property type="entry name" value="PPIase_dom_sf"/>
</dbReference>
<dbReference type="InterPro" id="IPR000297">
    <property type="entry name" value="PPIase_PpiC"/>
</dbReference>
<dbReference type="InterPro" id="IPR023058">
    <property type="entry name" value="PPIase_PpiC_CS"/>
</dbReference>
<dbReference type="InterPro" id="IPR023034">
    <property type="entry name" value="PPIase_SurA"/>
</dbReference>
<dbReference type="InterPro" id="IPR015391">
    <property type="entry name" value="SurA_N"/>
</dbReference>
<dbReference type="InterPro" id="IPR027304">
    <property type="entry name" value="Trigger_fact/SurA_dom_sf"/>
</dbReference>
<dbReference type="NCBIfam" id="NF008038">
    <property type="entry name" value="PRK10770.1"/>
    <property type="match status" value="1"/>
</dbReference>
<dbReference type="PANTHER" id="PTHR47637">
    <property type="entry name" value="CHAPERONE SURA"/>
    <property type="match status" value="1"/>
</dbReference>
<dbReference type="PANTHER" id="PTHR47637:SF1">
    <property type="entry name" value="CHAPERONE SURA"/>
    <property type="match status" value="1"/>
</dbReference>
<dbReference type="Pfam" id="PF00639">
    <property type="entry name" value="Rotamase"/>
    <property type="match status" value="2"/>
</dbReference>
<dbReference type="Pfam" id="PF09312">
    <property type="entry name" value="SurA_N"/>
    <property type="match status" value="1"/>
</dbReference>
<dbReference type="SUPFAM" id="SSF54534">
    <property type="entry name" value="FKBP-like"/>
    <property type="match status" value="2"/>
</dbReference>
<dbReference type="SUPFAM" id="SSF109998">
    <property type="entry name" value="Triger factor/SurA peptide-binding domain-like"/>
    <property type="match status" value="1"/>
</dbReference>
<dbReference type="PROSITE" id="PS01096">
    <property type="entry name" value="PPIC_PPIASE_1"/>
    <property type="match status" value="1"/>
</dbReference>
<dbReference type="PROSITE" id="PS50198">
    <property type="entry name" value="PPIC_PPIASE_2"/>
    <property type="match status" value="2"/>
</dbReference>
<comment type="function">
    <text evidence="1">Chaperone involved in the correct folding and assembly of outer membrane proteins. Recognizes specific patterns of aromatic residues and the orientation of their side chains, which are found more frequently in integral outer membrane proteins. May act in both early periplasmic and late outer membrane-associated steps of protein maturation.</text>
</comment>
<comment type="catalytic activity">
    <reaction evidence="1">
        <text>[protein]-peptidylproline (omega=180) = [protein]-peptidylproline (omega=0)</text>
        <dbReference type="Rhea" id="RHEA:16237"/>
        <dbReference type="Rhea" id="RHEA-COMP:10747"/>
        <dbReference type="Rhea" id="RHEA-COMP:10748"/>
        <dbReference type="ChEBI" id="CHEBI:83833"/>
        <dbReference type="ChEBI" id="CHEBI:83834"/>
        <dbReference type="EC" id="5.2.1.8"/>
    </reaction>
</comment>
<comment type="subcellular location">
    <subcellularLocation>
        <location evidence="1">Periplasm</location>
    </subcellularLocation>
    <text evidence="1">Is capable of associating with the outer membrane.</text>
</comment>
<comment type="domain">
    <text evidence="1">The PPIase activity resides only in the second parvulin domain. The N-terminal region and the C-terminal tail are necessary and sufficient for the chaperone activity of SurA. The PPIase activity is dispensable for SurA to function as a chaperone. The N-terminal region and the C-terminal tail are also required for porin recognition.</text>
</comment>
<organism>
    <name type="scientific">Shewanella sp. (strain MR-7)</name>
    <dbReference type="NCBI Taxonomy" id="60481"/>
    <lineage>
        <taxon>Bacteria</taxon>
        <taxon>Pseudomonadati</taxon>
        <taxon>Pseudomonadota</taxon>
        <taxon>Gammaproteobacteria</taxon>
        <taxon>Alteromonadales</taxon>
        <taxon>Shewanellaceae</taxon>
        <taxon>Shewanella</taxon>
    </lineage>
</organism>
<accession>Q0HS08</accession>
<evidence type="ECO:0000255" key="1">
    <source>
        <dbReference type="HAMAP-Rule" id="MF_01183"/>
    </source>
</evidence>